<proteinExistence type="inferred from homology"/>
<keyword id="KW-0067">ATP-binding</keyword>
<keyword id="KW-0436">Ligase</keyword>
<keyword id="KW-0547">Nucleotide-binding</keyword>
<keyword id="KW-0658">Purine biosynthesis</keyword>
<evidence type="ECO:0000255" key="1">
    <source>
        <dbReference type="HAMAP-Rule" id="MF_00137"/>
    </source>
</evidence>
<feature type="chain" id="PRO_1000018734" description="Phosphoribosylaminoimidazole-succinocarboxamide synthase">
    <location>
        <begin position="1"/>
        <end position="297"/>
    </location>
</feature>
<reference key="1">
    <citation type="journal article" date="2007" name="Proc. Natl. Acad. Sci. U.S.A.">
        <title>Genome plasticity of BCG and impact on vaccine efficacy.</title>
        <authorList>
            <person name="Brosch R."/>
            <person name="Gordon S.V."/>
            <person name="Garnier T."/>
            <person name="Eiglmeier K."/>
            <person name="Frigui W."/>
            <person name="Valenti P."/>
            <person name="Dos Santos S."/>
            <person name="Duthoy S."/>
            <person name="Lacroix C."/>
            <person name="Garcia-Pelayo C."/>
            <person name="Inwald J.K."/>
            <person name="Golby P."/>
            <person name="Garcia J.N."/>
            <person name="Hewinson R.G."/>
            <person name="Behr M.A."/>
            <person name="Quail M.A."/>
            <person name="Churcher C."/>
            <person name="Barrell B.G."/>
            <person name="Parkhill J."/>
            <person name="Cole S.T."/>
        </authorList>
    </citation>
    <scope>NUCLEOTIDE SEQUENCE [LARGE SCALE GENOMIC DNA]</scope>
    <source>
        <strain>BCG / Pasteur 1173P2</strain>
    </source>
</reference>
<accession>A1KGR3</accession>
<dbReference type="EC" id="6.3.2.6" evidence="1"/>
<dbReference type="EMBL" id="AM408590">
    <property type="protein sequence ID" value="CAL70818.1"/>
    <property type="molecule type" value="Genomic_DNA"/>
</dbReference>
<dbReference type="RefSeq" id="WP_003403962.1">
    <property type="nucleotide sequence ID" value="NC_008769.1"/>
</dbReference>
<dbReference type="SMR" id="A1KGR3"/>
<dbReference type="KEGG" id="mbb:BCG_0832"/>
<dbReference type="HOGENOM" id="CLU_045637_0_0_11"/>
<dbReference type="UniPathway" id="UPA00074">
    <property type="reaction ID" value="UER00131"/>
</dbReference>
<dbReference type="Proteomes" id="UP000001472">
    <property type="component" value="Chromosome"/>
</dbReference>
<dbReference type="GO" id="GO:0005737">
    <property type="term" value="C:cytoplasm"/>
    <property type="evidence" value="ECO:0007669"/>
    <property type="project" value="TreeGrafter"/>
</dbReference>
<dbReference type="GO" id="GO:0005524">
    <property type="term" value="F:ATP binding"/>
    <property type="evidence" value="ECO:0007669"/>
    <property type="project" value="UniProtKB-KW"/>
</dbReference>
<dbReference type="GO" id="GO:0004639">
    <property type="term" value="F:phosphoribosylaminoimidazolesuccinocarboxamide synthase activity"/>
    <property type="evidence" value="ECO:0007669"/>
    <property type="project" value="UniProtKB-UniRule"/>
</dbReference>
<dbReference type="GO" id="GO:0006189">
    <property type="term" value="P:'de novo' IMP biosynthetic process"/>
    <property type="evidence" value="ECO:0007669"/>
    <property type="project" value="UniProtKB-UniRule"/>
</dbReference>
<dbReference type="CDD" id="cd01414">
    <property type="entry name" value="SAICAR_synt_Sc"/>
    <property type="match status" value="1"/>
</dbReference>
<dbReference type="FunFam" id="3.30.200.20:FF:000199">
    <property type="entry name" value="Phosphoribosylaminoimidazole-succinocarboxamide synthase"/>
    <property type="match status" value="1"/>
</dbReference>
<dbReference type="FunFam" id="3.30.470.20:FF:000015">
    <property type="entry name" value="Phosphoribosylaminoimidazole-succinocarboxamide synthase"/>
    <property type="match status" value="1"/>
</dbReference>
<dbReference type="Gene3D" id="3.30.470.20">
    <property type="entry name" value="ATP-grasp fold, B domain"/>
    <property type="match status" value="1"/>
</dbReference>
<dbReference type="Gene3D" id="3.30.200.20">
    <property type="entry name" value="Phosphorylase Kinase, domain 1"/>
    <property type="match status" value="1"/>
</dbReference>
<dbReference type="HAMAP" id="MF_00137">
    <property type="entry name" value="SAICAR_synth"/>
    <property type="match status" value="1"/>
</dbReference>
<dbReference type="InterPro" id="IPR028923">
    <property type="entry name" value="SAICAR_synt/ADE2_N"/>
</dbReference>
<dbReference type="InterPro" id="IPR001636">
    <property type="entry name" value="SAICAR_synth"/>
</dbReference>
<dbReference type="InterPro" id="IPR018236">
    <property type="entry name" value="SAICAR_synthetase_CS"/>
</dbReference>
<dbReference type="NCBIfam" id="NF010568">
    <property type="entry name" value="PRK13961.1"/>
    <property type="match status" value="1"/>
</dbReference>
<dbReference type="NCBIfam" id="TIGR00081">
    <property type="entry name" value="purC"/>
    <property type="match status" value="1"/>
</dbReference>
<dbReference type="PANTHER" id="PTHR43700">
    <property type="entry name" value="PHOSPHORIBOSYLAMINOIMIDAZOLE-SUCCINOCARBOXAMIDE SYNTHASE"/>
    <property type="match status" value="1"/>
</dbReference>
<dbReference type="PANTHER" id="PTHR43700:SF1">
    <property type="entry name" value="PHOSPHORIBOSYLAMINOIMIDAZOLE-SUCCINOCARBOXAMIDE SYNTHASE"/>
    <property type="match status" value="1"/>
</dbReference>
<dbReference type="Pfam" id="PF01259">
    <property type="entry name" value="SAICAR_synt"/>
    <property type="match status" value="1"/>
</dbReference>
<dbReference type="SUPFAM" id="SSF56104">
    <property type="entry name" value="SAICAR synthase-like"/>
    <property type="match status" value="1"/>
</dbReference>
<dbReference type="PROSITE" id="PS01057">
    <property type="entry name" value="SAICAR_SYNTHETASE_1"/>
    <property type="match status" value="1"/>
</dbReference>
<dbReference type="PROSITE" id="PS01058">
    <property type="entry name" value="SAICAR_SYNTHETASE_2"/>
    <property type="match status" value="1"/>
</dbReference>
<name>PUR7_MYCBP</name>
<protein>
    <recommendedName>
        <fullName evidence="1">Phosphoribosylaminoimidazole-succinocarboxamide synthase</fullName>
        <ecNumber evidence="1">6.3.2.6</ecNumber>
    </recommendedName>
    <alternativeName>
        <fullName evidence="1">SAICAR synthetase</fullName>
    </alternativeName>
</protein>
<organism>
    <name type="scientific">Mycobacterium bovis (strain BCG / Pasteur 1173P2)</name>
    <dbReference type="NCBI Taxonomy" id="410289"/>
    <lineage>
        <taxon>Bacteria</taxon>
        <taxon>Bacillati</taxon>
        <taxon>Actinomycetota</taxon>
        <taxon>Actinomycetes</taxon>
        <taxon>Mycobacteriales</taxon>
        <taxon>Mycobacteriaceae</taxon>
        <taxon>Mycobacterium</taxon>
        <taxon>Mycobacterium tuberculosis complex</taxon>
    </lineage>
</organism>
<gene>
    <name evidence="1" type="primary">purC</name>
    <name type="ordered locus">BCG_0832</name>
</gene>
<comment type="catalytic activity">
    <reaction evidence="1">
        <text>5-amino-1-(5-phospho-D-ribosyl)imidazole-4-carboxylate + L-aspartate + ATP = (2S)-2-[5-amino-1-(5-phospho-beta-D-ribosyl)imidazole-4-carboxamido]succinate + ADP + phosphate + 2 H(+)</text>
        <dbReference type="Rhea" id="RHEA:22628"/>
        <dbReference type="ChEBI" id="CHEBI:15378"/>
        <dbReference type="ChEBI" id="CHEBI:29991"/>
        <dbReference type="ChEBI" id="CHEBI:30616"/>
        <dbReference type="ChEBI" id="CHEBI:43474"/>
        <dbReference type="ChEBI" id="CHEBI:58443"/>
        <dbReference type="ChEBI" id="CHEBI:77657"/>
        <dbReference type="ChEBI" id="CHEBI:456216"/>
        <dbReference type="EC" id="6.3.2.6"/>
    </reaction>
</comment>
<comment type="pathway">
    <text evidence="1">Purine metabolism; IMP biosynthesis via de novo pathway; 5-amino-1-(5-phospho-D-ribosyl)imidazole-4-carboxamide from 5-amino-1-(5-phospho-D-ribosyl)imidazole-4-carboxylate: step 1/2.</text>
</comment>
<comment type="similarity">
    <text evidence="1">Belongs to the SAICAR synthetase family.</text>
</comment>
<sequence length="297" mass="32930">MRPALSDYQHVASGKVREIYRVDDEHLLLVASDRISAYDYVLDSTIPDKGRVLTAMSAFFFGLVDAPNHLAGPPDDPRIPDEVLGRALVVRRLEMLPVECVARGYLTGSGLLDYQATGKVCGIALPPGLVEASRFATPLFTPATKAALGDHDENISFDRVVEMVGALRANQLRDRTLQTYVQAADHALTRGIIIADTKFEFGIDRHGNLLLADEIFTPDSSRYWPADDYRAGVVQTSFDKQFVRSWLTGSESGWDRGSDRPPPPLPEHIVEATRARYINAYERISELKFDDWIGPGA</sequence>